<keyword id="KW-0067">ATP-binding</keyword>
<keyword id="KW-0131">Cell cycle</keyword>
<keyword id="KW-0132">Cell division</keyword>
<keyword id="KW-0133">Cell shape</keyword>
<keyword id="KW-0961">Cell wall biogenesis/degradation</keyword>
<keyword id="KW-0963">Cytoplasm</keyword>
<keyword id="KW-0436">Ligase</keyword>
<keyword id="KW-0547">Nucleotide-binding</keyword>
<keyword id="KW-0573">Peptidoglycan synthesis</keyword>
<keyword id="KW-1185">Reference proteome</keyword>
<gene>
    <name type="primary">murD</name>
    <name type="ordered locus">BU218</name>
</gene>
<feature type="chain" id="PRO_0000108984" description="UDP-N-acetylmuramoylalanine--D-glutamate ligase">
    <location>
        <begin position="1"/>
        <end position="440"/>
    </location>
</feature>
<feature type="binding site" evidence="2">
    <location>
        <begin position="113"/>
        <end position="119"/>
    </location>
    <ligand>
        <name>ATP</name>
        <dbReference type="ChEBI" id="CHEBI:30616"/>
    </ligand>
</feature>
<protein>
    <recommendedName>
        <fullName>UDP-N-acetylmuramoylalanine--D-glutamate ligase</fullName>
        <ecNumber>6.3.2.9</ecNumber>
    </recommendedName>
    <alternativeName>
        <fullName>D-glutamic acid-adding enzyme</fullName>
    </alternativeName>
    <alternativeName>
        <fullName>UDP-N-acetylmuramoyl-L-alanyl-D-glutamate synthetase</fullName>
    </alternativeName>
</protein>
<comment type="function">
    <text evidence="1">Cell wall formation. Catalyzes the addition of glutamate to the nucleotide precursor UDP-N-acetylmuramoyl-L-alanine (UMA).</text>
</comment>
<comment type="catalytic activity">
    <reaction>
        <text>UDP-N-acetyl-alpha-D-muramoyl-L-alanine + D-glutamate + ATP = UDP-N-acetyl-alpha-D-muramoyl-L-alanyl-D-glutamate + ADP + phosphate + H(+)</text>
        <dbReference type="Rhea" id="RHEA:16429"/>
        <dbReference type="ChEBI" id="CHEBI:15378"/>
        <dbReference type="ChEBI" id="CHEBI:29986"/>
        <dbReference type="ChEBI" id="CHEBI:30616"/>
        <dbReference type="ChEBI" id="CHEBI:43474"/>
        <dbReference type="ChEBI" id="CHEBI:83898"/>
        <dbReference type="ChEBI" id="CHEBI:83900"/>
        <dbReference type="ChEBI" id="CHEBI:456216"/>
        <dbReference type="EC" id="6.3.2.9"/>
    </reaction>
</comment>
<comment type="pathway">
    <text>Cell wall biogenesis; peptidoglycan biosynthesis.</text>
</comment>
<comment type="subcellular location">
    <subcellularLocation>
        <location evidence="1">Cytoplasm</location>
    </subcellularLocation>
</comment>
<comment type="similarity">
    <text evidence="3">Belongs to the MurCDEF family.</text>
</comment>
<reference key="1">
    <citation type="journal article" date="2000" name="Nature">
        <title>Genome sequence of the endocellular bacterial symbiont of aphids Buchnera sp. APS.</title>
        <authorList>
            <person name="Shigenobu S."/>
            <person name="Watanabe H."/>
            <person name="Hattori M."/>
            <person name="Sakaki Y."/>
            <person name="Ishikawa H."/>
        </authorList>
    </citation>
    <scope>NUCLEOTIDE SEQUENCE [LARGE SCALE GENOMIC DNA]</scope>
    <source>
        <strain>APS</strain>
    </source>
</reference>
<sequence length="440" mass="49529">MSYNYFGKKILILGMGLTGISCINFFLKKGIKPKIIDESKHPSNFIKIPQNIEYSLGSLDHQWILESDLIVISPGISSFKPILIKARLLGIEIISDIELFSREVTCPIISITGTNGKSTVATMIEKIAKKSGYKAFLGGNIGVPVLEILDKEADLYIIELSSFQLENTFNLKSKIAVILNISEDHINRYPNGFQQYKNTKLSVYNQAEICIINSNDKIEKSLIHSKNKKWISFGTNRSDYRICSKSNDPILFFKNKKILNTSEILLYGYHNYNNILVSLAISDAMQFPRNDAINVLKSFSNLPHRFQIIKNEKGVRWINDSKSTNVNSTQVALNSIKTTGTIRLLLGGDSKSANFNILKNIFRTLKIKIYCFGRDGIKLSKICEKKSIYVENLKKAVILISKQVKSGDTVLLSPGCSSLGQFSNFEERGNLFIKLIKEIT</sequence>
<evidence type="ECO:0000250" key="1"/>
<evidence type="ECO:0000255" key="2"/>
<evidence type="ECO:0000305" key="3"/>
<accession>P57313</accession>
<dbReference type="EC" id="6.3.2.9"/>
<dbReference type="EMBL" id="BA000003">
    <property type="protein sequence ID" value="BAB12934.1"/>
    <property type="molecule type" value="Genomic_DNA"/>
</dbReference>
<dbReference type="RefSeq" id="NP_240048.1">
    <property type="nucleotide sequence ID" value="NC_002528.1"/>
</dbReference>
<dbReference type="RefSeq" id="WP_010896009.1">
    <property type="nucleotide sequence ID" value="NC_002528.1"/>
</dbReference>
<dbReference type="SMR" id="P57313"/>
<dbReference type="STRING" id="563178.BUAP5A_214"/>
<dbReference type="EnsemblBacteria" id="BAB12934">
    <property type="protein sequence ID" value="BAB12934"/>
    <property type="gene ID" value="BAB12934"/>
</dbReference>
<dbReference type="KEGG" id="buc:BU218"/>
<dbReference type="PATRIC" id="fig|107806.10.peg.231"/>
<dbReference type="eggNOG" id="COG0771">
    <property type="taxonomic scope" value="Bacteria"/>
</dbReference>
<dbReference type="HOGENOM" id="CLU_032540_1_0_6"/>
<dbReference type="UniPathway" id="UPA00219"/>
<dbReference type="Proteomes" id="UP000001806">
    <property type="component" value="Chromosome"/>
</dbReference>
<dbReference type="GO" id="GO:0005737">
    <property type="term" value="C:cytoplasm"/>
    <property type="evidence" value="ECO:0007669"/>
    <property type="project" value="UniProtKB-SubCell"/>
</dbReference>
<dbReference type="GO" id="GO:0005524">
    <property type="term" value="F:ATP binding"/>
    <property type="evidence" value="ECO:0007669"/>
    <property type="project" value="UniProtKB-UniRule"/>
</dbReference>
<dbReference type="GO" id="GO:0008764">
    <property type="term" value="F:UDP-N-acetylmuramoylalanine-D-glutamate ligase activity"/>
    <property type="evidence" value="ECO:0007669"/>
    <property type="project" value="UniProtKB-UniRule"/>
</dbReference>
<dbReference type="GO" id="GO:0051301">
    <property type="term" value="P:cell division"/>
    <property type="evidence" value="ECO:0007669"/>
    <property type="project" value="UniProtKB-KW"/>
</dbReference>
<dbReference type="GO" id="GO:0071555">
    <property type="term" value="P:cell wall organization"/>
    <property type="evidence" value="ECO:0007669"/>
    <property type="project" value="UniProtKB-KW"/>
</dbReference>
<dbReference type="GO" id="GO:0009252">
    <property type="term" value="P:peptidoglycan biosynthetic process"/>
    <property type="evidence" value="ECO:0007669"/>
    <property type="project" value="UniProtKB-UniRule"/>
</dbReference>
<dbReference type="GO" id="GO:0008360">
    <property type="term" value="P:regulation of cell shape"/>
    <property type="evidence" value="ECO:0007669"/>
    <property type="project" value="UniProtKB-KW"/>
</dbReference>
<dbReference type="Gene3D" id="3.90.190.20">
    <property type="entry name" value="Mur ligase, C-terminal domain"/>
    <property type="match status" value="1"/>
</dbReference>
<dbReference type="Gene3D" id="3.40.1190.10">
    <property type="entry name" value="Mur-like, catalytic domain"/>
    <property type="match status" value="1"/>
</dbReference>
<dbReference type="Gene3D" id="3.40.50.720">
    <property type="entry name" value="NAD(P)-binding Rossmann-like Domain"/>
    <property type="match status" value="1"/>
</dbReference>
<dbReference type="HAMAP" id="MF_00639">
    <property type="entry name" value="MurD"/>
    <property type="match status" value="1"/>
</dbReference>
<dbReference type="InterPro" id="IPR036565">
    <property type="entry name" value="Mur-like_cat_sf"/>
</dbReference>
<dbReference type="InterPro" id="IPR004101">
    <property type="entry name" value="Mur_ligase_C"/>
</dbReference>
<dbReference type="InterPro" id="IPR036615">
    <property type="entry name" value="Mur_ligase_C_dom_sf"/>
</dbReference>
<dbReference type="InterPro" id="IPR013221">
    <property type="entry name" value="Mur_ligase_cen"/>
</dbReference>
<dbReference type="InterPro" id="IPR005762">
    <property type="entry name" value="MurD"/>
</dbReference>
<dbReference type="NCBIfam" id="TIGR01087">
    <property type="entry name" value="murD"/>
    <property type="match status" value="1"/>
</dbReference>
<dbReference type="PANTHER" id="PTHR43692">
    <property type="entry name" value="UDP-N-ACETYLMURAMOYLALANINE--D-GLUTAMATE LIGASE"/>
    <property type="match status" value="1"/>
</dbReference>
<dbReference type="PANTHER" id="PTHR43692:SF1">
    <property type="entry name" value="UDP-N-ACETYLMURAMOYLALANINE--D-GLUTAMATE LIGASE"/>
    <property type="match status" value="1"/>
</dbReference>
<dbReference type="Pfam" id="PF02875">
    <property type="entry name" value="Mur_ligase_C"/>
    <property type="match status" value="1"/>
</dbReference>
<dbReference type="Pfam" id="PF08245">
    <property type="entry name" value="Mur_ligase_M"/>
    <property type="match status" value="1"/>
</dbReference>
<dbReference type="Pfam" id="PF21799">
    <property type="entry name" value="MurD-like_N"/>
    <property type="match status" value="1"/>
</dbReference>
<dbReference type="SUPFAM" id="SSF51984">
    <property type="entry name" value="MurCD N-terminal domain"/>
    <property type="match status" value="1"/>
</dbReference>
<dbReference type="SUPFAM" id="SSF53623">
    <property type="entry name" value="MurD-like peptide ligases, catalytic domain"/>
    <property type="match status" value="1"/>
</dbReference>
<dbReference type="SUPFAM" id="SSF53244">
    <property type="entry name" value="MurD-like peptide ligases, peptide-binding domain"/>
    <property type="match status" value="1"/>
</dbReference>
<name>MURD_BUCAI</name>
<organism>
    <name type="scientific">Buchnera aphidicola subsp. Acyrthosiphon pisum (strain APS)</name>
    <name type="common">Acyrthosiphon pisum symbiotic bacterium</name>
    <dbReference type="NCBI Taxonomy" id="107806"/>
    <lineage>
        <taxon>Bacteria</taxon>
        <taxon>Pseudomonadati</taxon>
        <taxon>Pseudomonadota</taxon>
        <taxon>Gammaproteobacteria</taxon>
        <taxon>Enterobacterales</taxon>
        <taxon>Erwiniaceae</taxon>
        <taxon>Buchnera</taxon>
    </lineage>
</organism>
<proteinExistence type="inferred from homology"/>